<evidence type="ECO:0000255" key="1">
    <source>
        <dbReference type="HAMAP-Rule" id="MF_00104"/>
    </source>
</evidence>
<keyword id="KW-0963">Cytoplasm</keyword>
<keyword id="KW-0255">Endonuclease</keyword>
<keyword id="KW-0378">Hydrolase</keyword>
<keyword id="KW-0460">Magnesium</keyword>
<keyword id="KW-0479">Metal-binding</keyword>
<keyword id="KW-0507">mRNA processing</keyword>
<keyword id="KW-0540">Nuclease</keyword>
<keyword id="KW-0694">RNA-binding</keyword>
<keyword id="KW-0698">rRNA processing</keyword>
<keyword id="KW-0699">rRNA-binding</keyword>
<keyword id="KW-0819">tRNA processing</keyword>
<comment type="function">
    <text evidence="1">Digests double-stranded RNA. Involved in the processing of primary rRNA transcript to yield the immediate precursors to the large and small rRNAs (23S and 16S). Processes some mRNAs, and tRNAs when they are encoded in the rRNA operon. Processes pre-crRNA and tracrRNA of type II CRISPR loci if present in the organism.</text>
</comment>
<comment type="catalytic activity">
    <reaction evidence="1">
        <text>Endonucleolytic cleavage to 5'-phosphomonoester.</text>
        <dbReference type="EC" id="3.1.26.3"/>
    </reaction>
</comment>
<comment type="cofactor">
    <cofactor evidence="1">
        <name>Mg(2+)</name>
        <dbReference type="ChEBI" id="CHEBI:18420"/>
    </cofactor>
</comment>
<comment type="subunit">
    <text evidence="1">Homodimer.</text>
</comment>
<comment type="subcellular location">
    <subcellularLocation>
        <location evidence="1">Cytoplasm</location>
    </subcellularLocation>
</comment>
<comment type="similarity">
    <text evidence="1">Belongs to the ribonuclease III family.</text>
</comment>
<feature type="chain" id="PRO_1000202835" description="Ribonuclease 3">
    <location>
        <begin position="1"/>
        <end position="226"/>
    </location>
</feature>
<feature type="domain" description="RNase III" evidence="1">
    <location>
        <begin position="6"/>
        <end position="128"/>
    </location>
</feature>
<feature type="domain" description="DRBM" evidence="1">
    <location>
        <begin position="155"/>
        <end position="225"/>
    </location>
</feature>
<feature type="active site" evidence="1">
    <location>
        <position position="45"/>
    </location>
</feature>
<feature type="active site" evidence="1">
    <location>
        <position position="117"/>
    </location>
</feature>
<feature type="binding site" evidence="1">
    <location>
        <position position="41"/>
    </location>
    <ligand>
        <name>Mg(2+)</name>
        <dbReference type="ChEBI" id="CHEBI:18420"/>
    </ligand>
</feature>
<feature type="binding site" evidence="1">
    <location>
        <position position="114"/>
    </location>
    <ligand>
        <name>Mg(2+)</name>
        <dbReference type="ChEBI" id="CHEBI:18420"/>
    </ligand>
</feature>
<feature type="binding site" evidence="1">
    <location>
        <position position="117"/>
    </location>
    <ligand>
        <name>Mg(2+)</name>
        <dbReference type="ChEBI" id="CHEBI:18420"/>
    </ligand>
</feature>
<gene>
    <name evidence="1" type="primary">rnc</name>
    <name type="ordered locus">BWG_2331</name>
</gene>
<reference key="1">
    <citation type="journal article" date="2009" name="J. Bacteriol.">
        <title>Genomic sequencing reveals regulatory mutations and recombinational events in the widely used MC4100 lineage of Escherichia coli K-12.</title>
        <authorList>
            <person name="Ferenci T."/>
            <person name="Zhou Z."/>
            <person name="Betteridge T."/>
            <person name="Ren Y."/>
            <person name="Liu Y."/>
            <person name="Feng L."/>
            <person name="Reeves P.R."/>
            <person name="Wang L."/>
        </authorList>
    </citation>
    <scope>NUCLEOTIDE SEQUENCE [LARGE SCALE GENOMIC DNA]</scope>
    <source>
        <strain>K12 / MC4100 / BW2952</strain>
    </source>
</reference>
<sequence>MNPIVINRLQRKLGYTFNHQELLQQALTHRSASSKHNERLEFLGDSILSYVIANALYHRFPRVDEGDMSRMRATLVRGNTLAELAREFELGECLRLGPGELKSGGFRRESILADTVEALIGGVFLDSDIQTVEKLILNWYQTRLDEISPGDKQKDPKTRLQEYLQGRHLPLPTYLVVQVRGEAHDQEFTIHCQVSGLSEPVVGTGSSRRKAEQAAAEQALKKLELE</sequence>
<accession>C4ZYJ0</accession>
<name>RNC_ECOBW</name>
<proteinExistence type="inferred from homology"/>
<dbReference type="EC" id="3.1.26.3" evidence="1"/>
<dbReference type="EMBL" id="CP001396">
    <property type="protein sequence ID" value="ACR65502.1"/>
    <property type="molecule type" value="Genomic_DNA"/>
</dbReference>
<dbReference type="RefSeq" id="WP_001068343.1">
    <property type="nucleotide sequence ID" value="NC_012759.1"/>
</dbReference>
<dbReference type="SMR" id="C4ZYJ0"/>
<dbReference type="GeneID" id="93774524"/>
<dbReference type="KEGG" id="ebw:BWG_2331"/>
<dbReference type="HOGENOM" id="CLU_000907_1_1_6"/>
<dbReference type="GO" id="GO:0005737">
    <property type="term" value="C:cytoplasm"/>
    <property type="evidence" value="ECO:0007669"/>
    <property type="project" value="UniProtKB-SubCell"/>
</dbReference>
<dbReference type="GO" id="GO:0003725">
    <property type="term" value="F:double-stranded RNA binding"/>
    <property type="evidence" value="ECO:0007669"/>
    <property type="project" value="TreeGrafter"/>
</dbReference>
<dbReference type="GO" id="GO:0046872">
    <property type="term" value="F:metal ion binding"/>
    <property type="evidence" value="ECO:0007669"/>
    <property type="project" value="UniProtKB-KW"/>
</dbReference>
<dbReference type="GO" id="GO:0004525">
    <property type="term" value="F:ribonuclease III activity"/>
    <property type="evidence" value="ECO:0007669"/>
    <property type="project" value="UniProtKB-UniRule"/>
</dbReference>
<dbReference type="GO" id="GO:0019843">
    <property type="term" value="F:rRNA binding"/>
    <property type="evidence" value="ECO:0007669"/>
    <property type="project" value="UniProtKB-KW"/>
</dbReference>
<dbReference type="GO" id="GO:0006397">
    <property type="term" value="P:mRNA processing"/>
    <property type="evidence" value="ECO:0007669"/>
    <property type="project" value="UniProtKB-UniRule"/>
</dbReference>
<dbReference type="GO" id="GO:0010468">
    <property type="term" value="P:regulation of gene expression"/>
    <property type="evidence" value="ECO:0007669"/>
    <property type="project" value="TreeGrafter"/>
</dbReference>
<dbReference type="GO" id="GO:0006364">
    <property type="term" value="P:rRNA processing"/>
    <property type="evidence" value="ECO:0007669"/>
    <property type="project" value="UniProtKB-UniRule"/>
</dbReference>
<dbReference type="GO" id="GO:0008033">
    <property type="term" value="P:tRNA processing"/>
    <property type="evidence" value="ECO:0007669"/>
    <property type="project" value="UniProtKB-KW"/>
</dbReference>
<dbReference type="CDD" id="cd10845">
    <property type="entry name" value="DSRM_RNAse_III_family"/>
    <property type="match status" value="1"/>
</dbReference>
<dbReference type="CDD" id="cd00593">
    <property type="entry name" value="RIBOc"/>
    <property type="match status" value="1"/>
</dbReference>
<dbReference type="FunFam" id="1.10.1520.10:FF:000001">
    <property type="entry name" value="Ribonuclease 3"/>
    <property type="match status" value="1"/>
</dbReference>
<dbReference type="FunFam" id="3.30.160.20:FF:000003">
    <property type="entry name" value="Ribonuclease 3"/>
    <property type="match status" value="1"/>
</dbReference>
<dbReference type="Gene3D" id="3.30.160.20">
    <property type="match status" value="1"/>
</dbReference>
<dbReference type="Gene3D" id="1.10.1520.10">
    <property type="entry name" value="Ribonuclease III domain"/>
    <property type="match status" value="1"/>
</dbReference>
<dbReference type="HAMAP" id="MF_00104">
    <property type="entry name" value="RNase_III"/>
    <property type="match status" value="1"/>
</dbReference>
<dbReference type="InterPro" id="IPR014720">
    <property type="entry name" value="dsRBD_dom"/>
</dbReference>
<dbReference type="InterPro" id="IPR011907">
    <property type="entry name" value="RNase_III"/>
</dbReference>
<dbReference type="InterPro" id="IPR000999">
    <property type="entry name" value="RNase_III_dom"/>
</dbReference>
<dbReference type="InterPro" id="IPR036389">
    <property type="entry name" value="RNase_III_sf"/>
</dbReference>
<dbReference type="NCBIfam" id="TIGR02191">
    <property type="entry name" value="RNaseIII"/>
    <property type="match status" value="1"/>
</dbReference>
<dbReference type="PANTHER" id="PTHR11207:SF0">
    <property type="entry name" value="RIBONUCLEASE 3"/>
    <property type="match status" value="1"/>
</dbReference>
<dbReference type="PANTHER" id="PTHR11207">
    <property type="entry name" value="RIBONUCLEASE III"/>
    <property type="match status" value="1"/>
</dbReference>
<dbReference type="Pfam" id="PF00035">
    <property type="entry name" value="dsrm"/>
    <property type="match status" value="1"/>
</dbReference>
<dbReference type="Pfam" id="PF14622">
    <property type="entry name" value="Ribonucleas_3_3"/>
    <property type="match status" value="1"/>
</dbReference>
<dbReference type="SMART" id="SM00358">
    <property type="entry name" value="DSRM"/>
    <property type="match status" value="1"/>
</dbReference>
<dbReference type="SMART" id="SM00535">
    <property type="entry name" value="RIBOc"/>
    <property type="match status" value="1"/>
</dbReference>
<dbReference type="SUPFAM" id="SSF54768">
    <property type="entry name" value="dsRNA-binding domain-like"/>
    <property type="match status" value="1"/>
</dbReference>
<dbReference type="SUPFAM" id="SSF69065">
    <property type="entry name" value="RNase III domain-like"/>
    <property type="match status" value="1"/>
</dbReference>
<dbReference type="PROSITE" id="PS50137">
    <property type="entry name" value="DS_RBD"/>
    <property type="match status" value="1"/>
</dbReference>
<dbReference type="PROSITE" id="PS00517">
    <property type="entry name" value="RNASE_3_1"/>
    <property type="match status" value="1"/>
</dbReference>
<dbReference type="PROSITE" id="PS50142">
    <property type="entry name" value="RNASE_3_2"/>
    <property type="match status" value="1"/>
</dbReference>
<organism>
    <name type="scientific">Escherichia coli (strain K12 / MC4100 / BW2952)</name>
    <dbReference type="NCBI Taxonomy" id="595496"/>
    <lineage>
        <taxon>Bacteria</taxon>
        <taxon>Pseudomonadati</taxon>
        <taxon>Pseudomonadota</taxon>
        <taxon>Gammaproteobacteria</taxon>
        <taxon>Enterobacterales</taxon>
        <taxon>Enterobacteriaceae</taxon>
        <taxon>Escherichia</taxon>
    </lineage>
</organism>
<protein>
    <recommendedName>
        <fullName evidence="1">Ribonuclease 3</fullName>
        <ecNumber evidence="1">3.1.26.3</ecNumber>
    </recommendedName>
    <alternativeName>
        <fullName evidence="1">Ribonuclease III</fullName>
        <shortName evidence="1">RNase III</shortName>
    </alternativeName>
</protein>